<sequence length="286" mass="31593">MASLRDIKAKITSTKKTSQITKAMEMVSASKLNRAEQNAKSFVPYMEKIQEVVASIAQGSKGINHPMLNARPVKRTGYIVITSDRGLAGGYNSNVLRTVSNVIRERHNMDSNQYSIIVLGRLGRDYLKRRGFNIIDEVVGLSDHPSFTDIKDLASRAIAMFADGAYDELYIYYNHYVSKISQEVTENKILPLTDVASDKPTTAYEFEPSEEEILKVLLPQYAESLVYGALLDGKASEHAARMTAMKSATDNAMEVIDSLTLSFNRARQAAITQEITEIVGGAAALE</sequence>
<reference key="1">
    <citation type="submission" date="2008-10" db="EMBL/GenBank/DDBJ databases">
        <title>Genome sequence of Bacillus cereus G9842.</title>
        <authorList>
            <person name="Dodson R.J."/>
            <person name="Durkin A.S."/>
            <person name="Rosovitz M.J."/>
            <person name="Rasko D.A."/>
            <person name="Hoffmaster A."/>
            <person name="Ravel J."/>
            <person name="Sutton G."/>
        </authorList>
    </citation>
    <scope>NUCLEOTIDE SEQUENCE [LARGE SCALE GENOMIC DNA]</scope>
    <source>
        <strain>G9842</strain>
    </source>
</reference>
<protein>
    <recommendedName>
        <fullName evidence="1">ATP synthase gamma chain</fullName>
    </recommendedName>
    <alternativeName>
        <fullName evidence="1">ATP synthase F1 sector gamma subunit</fullName>
    </alternativeName>
    <alternativeName>
        <fullName evidence="1">F-ATPase gamma subunit</fullName>
    </alternativeName>
</protein>
<proteinExistence type="inferred from homology"/>
<feature type="chain" id="PRO_1000134109" description="ATP synthase gamma chain">
    <location>
        <begin position="1"/>
        <end position="286"/>
    </location>
</feature>
<organism>
    <name type="scientific">Bacillus cereus (strain G9842)</name>
    <dbReference type="NCBI Taxonomy" id="405531"/>
    <lineage>
        <taxon>Bacteria</taxon>
        <taxon>Bacillati</taxon>
        <taxon>Bacillota</taxon>
        <taxon>Bacilli</taxon>
        <taxon>Bacillales</taxon>
        <taxon>Bacillaceae</taxon>
        <taxon>Bacillus</taxon>
        <taxon>Bacillus cereus group</taxon>
    </lineage>
</organism>
<accession>B7IQV9</accession>
<comment type="function">
    <text evidence="1">Produces ATP from ADP in the presence of a proton gradient across the membrane. The gamma chain is believed to be important in regulating ATPase activity and the flow of protons through the CF(0) complex.</text>
</comment>
<comment type="subunit">
    <text evidence="1">F-type ATPases have 2 components, CF(1) - the catalytic core - and CF(0) - the membrane proton channel. CF(1) has five subunits: alpha(3), beta(3), gamma(1), delta(1), epsilon(1). CF(0) has three main subunits: a, b and c.</text>
</comment>
<comment type="subcellular location">
    <subcellularLocation>
        <location evidence="1">Cell membrane</location>
        <topology evidence="1">Peripheral membrane protein</topology>
    </subcellularLocation>
</comment>
<comment type="similarity">
    <text evidence="1">Belongs to the ATPase gamma chain family.</text>
</comment>
<dbReference type="EMBL" id="CP001186">
    <property type="protein sequence ID" value="ACK95074.1"/>
    <property type="molecule type" value="Genomic_DNA"/>
</dbReference>
<dbReference type="RefSeq" id="WP_000157703.1">
    <property type="nucleotide sequence ID" value="NC_011772.1"/>
</dbReference>
<dbReference type="SMR" id="B7IQV9"/>
<dbReference type="GeneID" id="92886110"/>
<dbReference type="KEGG" id="bcg:BCG9842_B5523"/>
<dbReference type="HOGENOM" id="CLU_050669_0_1_9"/>
<dbReference type="Proteomes" id="UP000006744">
    <property type="component" value="Chromosome"/>
</dbReference>
<dbReference type="GO" id="GO:0005886">
    <property type="term" value="C:plasma membrane"/>
    <property type="evidence" value="ECO:0007669"/>
    <property type="project" value="UniProtKB-SubCell"/>
</dbReference>
<dbReference type="GO" id="GO:0045259">
    <property type="term" value="C:proton-transporting ATP synthase complex"/>
    <property type="evidence" value="ECO:0007669"/>
    <property type="project" value="UniProtKB-KW"/>
</dbReference>
<dbReference type="GO" id="GO:0005524">
    <property type="term" value="F:ATP binding"/>
    <property type="evidence" value="ECO:0007669"/>
    <property type="project" value="UniProtKB-UniRule"/>
</dbReference>
<dbReference type="GO" id="GO:0046933">
    <property type="term" value="F:proton-transporting ATP synthase activity, rotational mechanism"/>
    <property type="evidence" value="ECO:0007669"/>
    <property type="project" value="UniProtKB-UniRule"/>
</dbReference>
<dbReference type="GO" id="GO:0042777">
    <property type="term" value="P:proton motive force-driven plasma membrane ATP synthesis"/>
    <property type="evidence" value="ECO:0007669"/>
    <property type="project" value="UniProtKB-UniRule"/>
</dbReference>
<dbReference type="CDD" id="cd12151">
    <property type="entry name" value="F1-ATPase_gamma"/>
    <property type="match status" value="1"/>
</dbReference>
<dbReference type="FunFam" id="3.40.1380.10:FF:000002">
    <property type="entry name" value="ATP synthase gamma chain"/>
    <property type="match status" value="1"/>
</dbReference>
<dbReference type="Gene3D" id="3.40.1380.10">
    <property type="match status" value="1"/>
</dbReference>
<dbReference type="Gene3D" id="1.10.287.80">
    <property type="entry name" value="ATP synthase, gamma subunit, helix hairpin domain"/>
    <property type="match status" value="1"/>
</dbReference>
<dbReference type="HAMAP" id="MF_00815">
    <property type="entry name" value="ATP_synth_gamma_bact"/>
    <property type="match status" value="1"/>
</dbReference>
<dbReference type="InterPro" id="IPR035968">
    <property type="entry name" value="ATP_synth_F1_ATPase_gsu"/>
</dbReference>
<dbReference type="InterPro" id="IPR000131">
    <property type="entry name" value="ATP_synth_F1_gsu"/>
</dbReference>
<dbReference type="InterPro" id="IPR023632">
    <property type="entry name" value="ATP_synth_F1_gsu_CS"/>
</dbReference>
<dbReference type="NCBIfam" id="TIGR01146">
    <property type="entry name" value="ATPsyn_F1gamma"/>
    <property type="match status" value="1"/>
</dbReference>
<dbReference type="PANTHER" id="PTHR11693">
    <property type="entry name" value="ATP SYNTHASE GAMMA CHAIN"/>
    <property type="match status" value="1"/>
</dbReference>
<dbReference type="PANTHER" id="PTHR11693:SF22">
    <property type="entry name" value="ATP SYNTHASE SUBUNIT GAMMA, MITOCHONDRIAL"/>
    <property type="match status" value="1"/>
</dbReference>
<dbReference type="Pfam" id="PF00231">
    <property type="entry name" value="ATP-synt"/>
    <property type="match status" value="1"/>
</dbReference>
<dbReference type="PRINTS" id="PR00126">
    <property type="entry name" value="ATPASEGAMMA"/>
</dbReference>
<dbReference type="SUPFAM" id="SSF52943">
    <property type="entry name" value="ATP synthase (F1-ATPase), gamma subunit"/>
    <property type="match status" value="1"/>
</dbReference>
<dbReference type="PROSITE" id="PS00153">
    <property type="entry name" value="ATPASE_GAMMA"/>
    <property type="match status" value="1"/>
</dbReference>
<evidence type="ECO:0000255" key="1">
    <source>
        <dbReference type="HAMAP-Rule" id="MF_00815"/>
    </source>
</evidence>
<gene>
    <name evidence="1" type="primary">atpG</name>
    <name type="ordered locus">BCG9842_B5523</name>
</gene>
<name>ATPG_BACC2</name>
<keyword id="KW-0066">ATP synthesis</keyword>
<keyword id="KW-1003">Cell membrane</keyword>
<keyword id="KW-0139">CF(1)</keyword>
<keyword id="KW-0375">Hydrogen ion transport</keyword>
<keyword id="KW-0406">Ion transport</keyword>
<keyword id="KW-0472">Membrane</keyword>
<keyword id="KW-0813">Transport</keyword>